<gene>
    <name evidence="5" type="primary">TE1</name>
</gene>
<reference key="1">
    <citation type="journal article" date="2013" name="Mol. Plant">
        <title>Characterization of the formation of branched short-chain fatty acid:CoAs for bitter acid biosynthesis in hop glandular trichomes.</title>
        <authorList>
            <person name="Xu H."/>
            <person name="Zhang F."/>
            <person name="Liu B."/>
            <person name="Huhman D.V."/>
            <person name="Sumner L.W."/>
            <person name="Dixon R.A."/>
            <person name="Wang G."/>
        </authorList>
    </citation>
    <scope>NUCLEOTIDE SEQUENCE [MRNA]</scope>
    <scope>TISSUE SPECIFICITY</scope>
    <scope>GENE FAMILY</scope>
    <scope>NOMENCLATURE</scope>
    <source>
        <strain>cv. Nugget</strain>
    </source>
</reference>
<keyword id="KW-0150">Chloroplast</keyword>
<keyword id="KW-0378">Hydrolase</keyword>
<keyword id="KW-0443">Lipid metabolism</keyword>
<keyword id="KW-0934">Plastid</keyword>
<keyword id="KW-0809">Transit peptide</keyword>
<accession>S4TEF7</accession>
<name>TE1_HUMLU</name>
<comment type="function">
    <text evidence="2">Acyl-ACP thioesterase involved in the production of fatty acids and beta-keto fatty acids (By similarity). May play a role in cuticular wax synthesis (By similarity).</text>
</comment>
<comment type="subcellular location">
    <subcellularLocation>
        <location evidence="3">Plastid</location>
        <location evidence="3">Chloroplast</location>
    </subcellularLocation>
</comment>
<comment type="tissue specificity">
    <text evidence="4">Mostly expressed at low levels in glandular trichomes (lupulin glands), and, to a lower extent, in stems, leaves, flowers and cones.</text>
</comment>
<comment type="similarity">
    <text evidence="6">Belongs to the 4-hydroxybenzoyl-CoA thioesterase family.</text>
</comment>
<evidence type="ECO:0000250" key="1">
    <source>
        <dbReference type="UniProtKB" id="P56653"/>
    </source>
</evidence>
<evidence type="ECO:0000250" key="2">
    <source>
        <dbReference type="UniProtKB" id="Q9C7I5"/>
    </source>
</evidence>
<evidence type="ECO:0000255" key="3"/>
<evidence type="ECO:0000269" key="4">
    <source>
    </source>
</evidence>
<evidence type="ECO:0000303" key="5">
    <source>
    </source>
</evidence>
<evidence type="ECO:0000305" key="6"/>
<protein>
    <recommendedName>
        <fullName evidence="5">Acyl-acyl carrier protein thioesterase TE1, chloroplastic</fullName>
        <shortName evidence="5">HlTE1</shortName>
        <ecNumber evidence="2">3.1.2.-</ecNumber>
    </recommendedName>
    <alternativeName>
        <fullName evidence="5">Acyl-ACP thioesterase TE1</fullName>
    </alternativeName>
    <alternativeName>
        <fullName evidence="5">Acyl-lipid thioesterase 1</fullName>
    </alternativeName>
</protein>
<sequence>MLQTISLLPAYNKPPVATLLHPHRSSSSSPLPCGHVSPVTHGGLIMNPQKRLRSFSANMKCSSTNSIIDDTIIRNGQRIMMSEYFDVQLKVRDYELDQYGVVNNAAYASYCQHGCIELMESIGVSGDRISRTGDALAISELSIKFLSPLRGGDKFVMKVRYCRISAVRTYFEHKIFKLPNREPILEAKATTIWLNKKYRPTRMPLEITSLLDKFFTR</sequence>
<proteinExistence type="evidence at transcript level"/>
<dbReference type="EC" id="3.1.2.-" evidence="2"/>
<dbReference type="EMBL" id="JX878391">
    <property type="protein sequence ID" value="AGA17931.1"/>
    <property type="molecule type" value="mRNA"/>
</dbReference>
<dbReference type="SMR" id="S4TEF7"/>
<dbReference type="GO" id="GO:0009507">
    <property type="term" value="C:chloroplast"/>
    <property type="evidence" value="ECO:0007669"/>
    <property type="project" value="UniProtKB-SubCell"/>
</dbReference>
<dbReference type="GO" id="GO:0016297">
    <property type="term" value="F:fatty acyl-[ACP] hydrolase activity"/>
    <property type="evidence" value="ECO:0007669"/>
    <property type="project" value="TreeGrafter"/>
</dbReference>
<dbReference type="GO" id="GO:0006629">
    <property type="term" value="P:lipid metabolic process"/>
    <property type="evidence" value="ECO:0007669"/>
    <property type="project" value="UniProtKB-KW"/>
</dbReference>
<dbReference type="CDD" id="cd00586">
    <property type="entry name" value="4HBT"/>
    <property type="match status" value="1"/>
</dbReference>
<dbReference type="Gene3D" id="3.10.129.10">
    <property type="entry name" value="Hotdog Thioesterase"/>
    <property type="match status" value="1"/>
</dbReference>
<dbReference type="InterPro" id="IPR050563">
    <property type="entry name" value="4-hydroxybenzoyl-CoA_TE"/>
</dbReference>
<dbReference type="InterPro" id="IPR029069">
    <property type="entry name" value="HotDog_dom_sf"/>
</dbReference>
<dbReference type="PANTHER" id="PTHR31793">
    <property type="entry name" value="4-HYDROXYBENZOYL-COA THIOESTERASE FAMILY MEMBER"/>
    <property type="match status" value="1"/>
</dbReference>
<dbReference type="PANTHER" id="PTHR31793:SF27">
    <property type="entry name" value="NOVEL THIOESTERASE SUPERFAMILY DOMAIN AND SAPOSIN A-TYPE DOMAIN CONTAINING PROTEIN (0610012H03RIK)"/>
    <property type="match status" value="1"/>
</dbReference>
<dbReference type="Pfam" id="PF13279">
    <property type="entry name" value="4HBT_2"/>
    <property type="match status" value="1"/>
</dbReference>
<dbReference type="SUPFAM" id="SSF54637">
    <property type="entry name" value="Thioesterase/thiol ester dehydrase-isomerase"/>
    <property type="match status" value="1"/>
</dbReference>
<organism>
    <name type="scientific">Humulus lupulus</name>
    <name type="common">European hop</name>
    <dbReference type="NCBI Taxonomy" id="3486"/>
    <lineage>
        <taxon>Eukaryota</taxon>
        <taxon>Viridiplantae</taxon>
        <taxon>Streptophyta</taxon>
        <taxon>Embryophyta</taxon>
        <taxon>Tracheophyta</taxon>
        <taxon>Spermatophyta</taxon>
        <taxon>Magnoliopsida</taxon>
        <taxon>eudicotyledons</taxon>
        <taxon>Gunneridae</taxon>
        <taxon>Pentapetalae</taxon>
        <taxon>rosids</taxon>
        <taxon>fabids</taxon>
        <taxon>Rosales</taxon>
        <taxon>Cannabaceae</taxon>
        <taxon>Humulus</taxon>
    </lineage>
</organism>
<feature type="transit peptide" description="Chloroplast" evidence="3">
    <location>
        <begin position="1"/>
        <end position="56"/>
    </location>
</feature>
<feature type="chain" id="PRO_0000452959" description="Acyl-acyl carrier protein thioesterase TE1, chloroplastic">
    <location>
        <begin position="57"/>
        <end position="217"/>
    </location>
</feature>
<feature type="active site" evidence="1 2">
    <location>
        <position position="97"/>
    </location>
</feature>